<proteinExistence type="evidence at transcript level"/>
<feature type="chain" id="PRO_0000313011" description="Gap junction delta-4 protein">
    <location>
        <begin position="1"/>
        <end position="364"/>
    </location>
</feature>
<feature type="topological domain" description="Cytoplasmic" evidence="2">
    <location>
        <begin position="1"/>
        <end position="19"/>
    </location>
</feature>
<feature type="transmembrane region" description="Helical" evidence="2">
    <location>
        <begin position="20"/>
        <end position="40"/>
    </location>
</feature>
<feature type="topological domain" description="Extracellular" evidence="2">
    <location>
        <begin position="41"/>
        <end position="76"/>
    </location>
</feature>
<feature type="transmembrane region" description="Helical" evidence="2">
    <location>
        <begin position="77"/>
        <end position="97"/>
    </location>
</feature>
<feature type="topological domain" description="Cytoplasmic" evidence="2">
    <location>
        <begin position="98"/>
        <end position="128"/>
    </location>
</feature>
<feature type="transmembrane region" description="Helical" evidence="2">
    <location>
        <begin position="129"/>
        <end position="149"/>
    </location>
</feature>
<feature type="topological domain" description="Extracellular" evidence="2">
    <location>
        <begin position="150"/>
        <end position="173"/>
    </location>
</feature>
<feature type="transmembrane region" description="Helical" evidence="2">
    <location>
        <begin position="174"/>
        <end position="194"/>
    </location>
</feature>
<feature type="topological domain" description="Cytoplasmic" evidence="2">
    <location>
        <begin position="195"/>
        <end position="364"/>
    </location>
</feature>
<feature type="region of interest" description="Disordered" evidence="3">
    <location>
        <begin position="331"/>
        <end position="364"/>
    </location>
</feature>
<feature type="compositionally biased region" description="Polar residues" evidence="3">
    <location>
        <begin position="331"/>
        <end position="340"/>
    </location>
</feature>
<feature type="sequence conflict" description="In Ref. 2; BAC35240." evidence="4" ref="2">
    <original>L</original>
    <variation>P</variation>
    <location>
        <position position="198"/>
    </location>
</feature>
<feature type="sequence conflict" description="In Ref. 2; BAC35240." evidence="4" ref="2">
    <original>A</original>
    <variation>T</variation>
    <location>
        <position position="222"/>
    </location>
</feature>
<feature type="sequence conflict" description="In Ref. 1; CAC93844." evidence="4" ref="1">
    <original>C</original>
    <variation>G</variation>
    <location>
        <position position="345"/>
    </location>
</feature>
<dbReference type="EMBL" id="AJ414562">
    <property type="protein sequence ID" value="CAC93844.1"/>
    <property type="molecule type" value="mRNA"/>
</dbReference>
<dbReference type="EMBL" id="AK034663">
    <property type="protein sequence ID" value="BAC28788.1"/>
    <property type="molecule type" value="mRNA"/>
</dbReference>
<dbReference type="EMBL" id="AK053016">
    <property type="protein sequence ID" value="BAC35240.1"/>
    <property type="molecule type" value="mRNA"/>
</dbReference>
<dbReference type="EMBL" id="BC137984">
    <property type="protein sequence ID" value="AAI37985.1"/>
    <property type="molecule type" value="mRNA"/>
</dbReference>
<dbReference type="CCDS" id="CCDS29049.1"/>
<dbReference type="RefSeq" id="NP_694726.2">
    <property type="nucleotide sequence ID" value="NM_153086.5"/>
</dbReference>
<dbReference type="SMR" id="Q8BSD4"/>
<dbReference type="FunCoup" id="Q8BSD4">
    <property type="interactions" value="340"/>
</dbReference>
<dbReference type="STRING" id="10090.ENSMUSP00000035472"/>
<dbReference type="PhosphoSitePlus" id="Q8BSD4"/>
<dbReference type="PaxDb" id="10090-ENSMUSP00000035472"/>
<dbReference type="Antibodypedia" id="26696">
    <property type="antibodies" value="47 antibodies from 12 providers"/>
</dbReference>
<dbReference type="DNASU" id="225152"/>
<dbReference type="Ensembl" id="ENSMUST00000041007.4">
    <property type="protein sequence ID" value="ENSMUSP00000035472.4"/>
    <property type="gene ID" value="ENSMUSG00000036855.4"/>
</dbReference>
<dbReference type="GeneID" id="225152"/>
<dbReference type="KEGG" id="mmu:225152"/>
<dbReference type="UCSC" id="uc008eah.1">
    <property type="organism name" value="mouse"/>
</dbReference>
<dbReference type="AGR" id="MGI:2444990"/>
<dbReference type="CTD" id="219770"/>
<dbReference type="MGI" id="MGI:2444990">
    <property type="gene designation" value="Gjd4"/>
</dbReference>
<dbReference type="VEuPathDB" id="HostDB:ENSMUSG00000036855"/>
<dbReference type="eggNOG" id="ENOG502QWIV">
    <property type="taxonomic scope" value="Eukaryota"/>
</dbReference>
<dbReference type="GeneTree" id="ENSGT01130000278343"/>
<dbReference type="HOGENOM" id="CLU_037388_3_0_1"/>
<dbReference type="InParanoid" id="Q8BSD4"/>
<dbReference type="OMA" id="LRTTQWV"/>
<dbReference type="OrthoDB" id="9943496at2759"/>
<dbReference type="PhylomeDB" id="Q8BSD4"/>
<dbReference type="TreeFam" id="TF329606"/>
<dbReference type="Reactome" id="R-MMU-190861">
    <property type="pathway name" value="Gap junction assembly"/>
</dbReference>
<dbReference type="BioGRID-ORCS" id="225152">
    <property type="hits" value="1 hit in 77 CRISPR screens"/>
</dbReference>
<dbReference type="PRO" id="PR:Q8BSD4"/>
<dbReference type="Proteomes" id="UP000000589">
    <property type="component" value="Chromosome 18"/>
</dbReference>
<dbReference type="RNAct" id="Q8BSD4">
    <property type="molecule type" value="protein"/>
</dbReference>
<dbReference type="Bgee" id="ENSMUSG00000036855">
    <property type="expression patterns" value="Expressed in lower leg mesenchyme and 19 other cell types or tissues"/>
</dbReference>
<dbReference type="GO" id="GO:0005922">
    <property type="term" value="C:connexin complex"/>
    <property type="evidence" value="ECO:0007669"/>
    <property type="project" value="InterPro"/>
</dbReference>
<dbReference type="GO" id="GO:0005886">
    <property type="term" value="C:plasma membrane"/>
    <property type="evidence" value="ECO:0000314"/>
    <property type="project" value="MGI"/>
</dbReference>
<dbReference type="GO" id="GO:0007154">
    <property type="term" value="P:cell communication"/>
    <property type="evidence" value="ECO:0007669"/>
    <property type="project" value="InterPro"/>
</dbReference>
<dbReference type="GO" id="GO:0014717">
    <property type="term" value="P:regulation of satellite cell activation involved in skeletal muscle regeneration"/>
    <property type="evidence" value="ECO:0000315"/>
    <property type="project" value="MGI"/>
</dbReference>
<dbReference type="FunFam" id="1.20.1440.80:FF:000007">
    <property type="entry name" value="Gap junction delta-4 protein"/>
    <property type="match status" value="1"/>
</dbReference>
<dbReference type="Gene3D" id="1.20.1440.80">
    <property type="entry name" value="Gap junction channel protein cysteine-rich domain"/>
    <property type="match status" value="1"/>
</dbReference>
<dbReference type="InterPro" id="IPR000500">
    <property type="entry name" value="Connexin"/>
</dbReference>
<dbReference type="InterPro" id="IPR019570">
    <property type="entry name" value="Connexin_CCC"/>
</dbReference>
<dbReference type="InterPro" id="IPR017990">
    <property type="entry name" value="Connexin_CS"/>
</dbReference>
<dbReference type="InterPro" id="IPR013092">
    <property type="entry name" value="Connexin_N"/>
</dbReference>
<dbReference type="InterPro" id="IPR038359">
    <property type="entry name" value="Connexin_N_sf"/>
</dbReference>
<dbReference type="PANTHER" id="PTHR11984">
    <property type="entry name" value="CONNEXIN"/>
    <property type="match status" value="1"/>
</dbReference>
<dbReference type="PANTHER" id="PTHR11984:SF3">
    <property type="entry name" value="GAP JUNCTION DELTA-4 PROTEIN"/>
    <property type="match status" value="1"/>
</dbReference>
<dbReference type="Pfam" id="PF00029">
    <property type="entry name" value="Connexin"/>
    <property type="match status" value="2"/>
</dbReference>
<dbReference type="PRINTS" id="PR00206">
    <property type="entry name" value="CONNEXIN"/>
</dbReference>
<dbReference type="SMART" id="SM00037">
    <property type="entry name" value="CNX"/>
    <property type="match status" value="1"/>
</dbReference>
<dbReference type="SMART" id="SM01089">
    <property type="entry name" value="Connexin_CCC"/>
    <property type="match status" value="1"/>
</dbReference>
<dbReference type="PROSITE" id="PS00407">
    <property type="entry name" value="CONNEXINS_1"/>
    <property type="match status" value="1"/>
</dbReference>
<dbReference type="PROSITE" id="PS00408">
    <property type="entry name" value="CONNEXINS_2"/>
    <property type="match status" value="1"/>
</dbReference>
<evidence type="ECO:0000250" key="1"/>
<evidence type="ECO:0000255" key="2"/>
<evidence type="ECO:0000256" key="3">
    <source>
        <dbReference type="SAM" id="MobiDB-lite"/>
    </source>
</evidence>
<evidence type="ECO:0000305" key="4"/>
<name>CXD4_MOUSE</name>
<organism>
    <name type="scientific">Mus musculus</name>
    <name type="common">Mouse</name>
    <dbReference type="NCBI Taxonomy" id="10090"/>
    <lineage>
        <taxon>Eukaryota</taxon>
        <taxon>Metazoa</taxon>
        <taxon>Chordata</taxon>
        <taxon>Craniata</taxon>
        <taxon>Vertebrata</taxon>
        <taxon>Euteleostomi</taxon>
        <taxon>Mammalia</taxon>
        <taxon>Eutheria</taxon>
        <taxon>Euarchontoglires</taxon>
        <taxon>Glires</taxon>
        <taxon>Rodentia</taxon>
        <taxon>Myomorpha</taxon>
        <taxon>Muroidea</taxon>
        <taxon>Muridae</taxon>
        <taxon>Murinae</taxon>
        <taxon>Mus</taxon>
        <taxon>Mus</taxon>
    </lineage>
</organism>
<keyword id="KW-0965">Cell junction</keyword>
<keyword id="KW-1003">Cell membrane</keyword>
<keyword id="KW-0303">Gap junction</keyword>
<keyword id="KW-0472">Membrane</keyword>
<keyword id="KW-1185">Reference proteome</keyword>
<keyword id="KW-0812">Transmembrane</keyword>
<keyword id="KW-1133">Transmembrane helix</keyword>
<sequence length="364" mass="40042">MEKLNLLGFLIITLNCNVTIMGMIWLIVEVLLRMLVVVLAGSPIYEDEQERFICNTLQPGCANVCYDLFSPVSPLRFWLVQSLALLLPSVVFGTYTLHRGAKLAAVGGACRPQVPDLSTAYLVHLLLRMLLEAGLAFLHYFLFGFSVPARVSCSHVPCSGAVDCYVSRPTEKSLLILFFWAVSALSFLLSLADLLWILPRRKTLRTTQWVNGEARPVCEVPAPPPCLLQNPQGYLSQGQVDQEDRQEEQVVPEFPCMWTAGQSDNSNVGQACVSGLLEHSDQDASEATSSAGDRLTVAHTAHELRFHRETSLDLGGKNTQADELSLATQSHLARHSSASKPQAPCRLTTSGSAPHLRTKKSEWV</sequence>
<reference key="1">
    <citation type="journal article" date="2002" name="Biol. Chem.">
        <title>Structural and functional diversity of connexin genes in the mouse and human genome.</title>
        <authorList>
            <person name="Willecke K."/>
            <person name="Eiberger J."/>
            <person name="Degen J."/>
            <person name="Eckardt D."/>
            <person name="Romualdi A."/>
            <person name="Guldenagel M."/>
            <person name="Deutsch U."/>
            <person name="Soehl G."/>
        </authorList>
    </citation>
    <scope>NUCLEOTIDE SEQUENCE [GENOMIC DNA]</scope>
    <source>
        <strain>129/Sv</strain>
    </source>
</reference>
<reference key="2">
    <citation type="journal article" date="2005" name="Science">
        <title>The transcriptional landscape of the mammalian genome.</title>
        <authorList>
            <person name="Carninci P."/>
            <person name="Kasukawa T."/>
            <person name="Katayama S."/>
            <person name="Gough J."/>
            <person name="Frith M.C."/>
            <person name="Maeda N."/>
            <person name="Oyama R."/>
            <person name="Ravasi T."/>
            <person name="Lenhard B."/>
            <person name="Wells C."/>
            <person name="Kodzius R."/>
            <person name="Shimokawa K."/>
            <person name="Bajic V.B."/>
            <person name="Brenner S.E."/>
            <person name="Batalov S."/>
            <person name="Forrest A.R."/>
            <person name="Zavolan M."/>
            <person name="Davis M.J."/>
            <person name="Wilming L.G."/>
            <person name="Aidinis V."/>
            <person name="Allen J.E."/>
            <person name="Ambesi-Impiombato A."/>
            <person name="Apweiler R."/>
            <person name="Aturaliya R.N."/>
            <person name="Bailey T.L."/>
            <person name="Bansal M."/>
            <person name="Baxter L."/>
            <person name="Beisel K.W."/>
            <person name="Bersano T."/>
            <person name="Bono H."/>
            <person name="Chalk A.M."/>
            <person name="Chiu K.P."/>
            <person name="Choudhary V."/>
            <person name="Christoffels A."/>
            <person name="Clutterbuck D.R."/>
            <person name="Crowe M.L."/>
            <person name="Dalla E."/>
            <person name="Dalrymple B.P."/>
            <person name="de Bono B."/>
            <person name="Della Gatta G."/>
            <person name="di Bernardo D."/>
            <person name="Down T."/>
            <person name="Engstrom P."/>
            <person name="Fagiolini M."/>
            <person name="Faulkner G."/>
            <person name="Fletcher C.F."/>
            <person name="Fukushima T."/>
            <person name="Furuno M."/>
            <person name="Futaki S."/>
            <person name="Gariboldi M."/>
            <person name="Georgii-Hemming P."/>
            <person name="Gingeras T.R."/>
            <person name="Gojobori T."/>
            <person name="Green R.E."/>
            <person name="Gustincich S."/>
            <person name="Harbers M."/>
            <person name="Hayashi Y."/>
            <person name="Hensch T.K."/>
            <person name="Hirokawa N."/>
            <person name="Hill D."/>
            <person name="Huminiecki L."/>
            <person name="Iacono M."/>
            <person name="Ikeo K."/>
            <person name="Iwama A."/>
            <person name="Ishikawa T."/>
            <person name="Jakt M."/>
            <person name="Kanapin A."/>
            <person name="Katoh M."/>
            <person name="Kawasawa Y."/>
            <person name="Kelso J."/>
            <person name="Kitamura H."/>
            <person name="Kitano H."/>
            <person name="Kollias G."/>
            <person name="Krishnan S.P."/>
            <person name="Kruger A."/>
            <person name="Kummerfeld S.K."/>
            <person name="Kurochkin I.V."/>
            <person name="Lareau L.F."/>
            <person name="Lazarevic D."/>
            <person name="Lipovich L."/>
            <person name="Liu J."/>
            <person name="Liuni S."/>
            <person name="McWilliam S."/>
            <person name="Madan Babu M."/>
            <person name="Madera M."/>
            <person name="Marchionni L."/>
            <person name="Matsuda H."/>
            <person name="Matsuzawa S."/>
            <person name="Miki H."/>
            <person name="Mignone F."/>
            <person name="Miyake S."/>
            <person name="Morris K."/>
            <person name="Mottagui-Tabar S."/>
            <person name="Mulder N."/>
            <person name="Nakano N."/>
            <person name="Nakauchi H."/>
            <person name="Ng P."/>
            <person name="Nilsson R."/>
            <person name="Nishiguchi S."/>
            <person name="Nishikawa S."/>
            <person name="Nori F."/>
            <person name="Ohara O."/>
            <person name="Okazaki Y."/>
            <person name="Orlando V."/>
            <person name="Pang K.C."/>
            <person name="Pavan W.J."/>
            <person name="Pavesi G."/>
            <person name="Pesole G."/>
            <person name="Petrovsky N."/>
            <person name="Piazza S."/>
            <person name="Reed J."/>
            <person name="Reid J.F."/>
            <person name="Ring B.Z."/>
            <person name="Ringwald M."/>
            <person name="Rost B."/>
            <person name="Ruan Y."/>
            <person name="Salzberg S.L."/>
            <person name="Sandelin A."/>
            <person name="Schneider C."/>
            <person name="Schoenbach C."/>
            <person name="Sekiguchi K."/>
            <person name="Semple C.A."/>
            <person name="Seno S."/>
            <person name="Sessa L."/>
            <person name="Sheng Y."/>
            <person name="Shibata Y."/>
            <person name="Shimada H."/>
            <person name="Shimada K."/>
            <person name="Silva D."/>
            <person name="Sinclair B."/>
            <person name="Sperling S."/>
            <person name="Stupka E."/>
            <person name="Sugiura K."/>
            <person name="Sultana R."/>
            <person name="Takenaka Y."/>
            <person name="Taki K."/>
            <person name="Tammoja K."/>
            <person name="Tan S.L."/>
            <person name="Tang S."/>
            <person name="Taylor M.S."/>
            <person name="Tegner J."/>
            <person name="Teichmann S.A."/>
            <person name="Ueda H.R."/>
            <person name="van Nimwegen E."/>
            <person name="Verardo R."/>
            <person name="Wei C.L."/>
            <person name="Yagi K."/>
            <person name="Yamanishi H."/>
            <person name="Zabarovsky E."/>
            <person name="Zhu S."/>
            <person name="Zimmer A."/>
            <person name="Hide W."/>
            <person name="Bult C."/>
            <person name="Grimmond S.M."/>
            <person name="Teasdale R.D."/>
            <person name="Liu E.T."/>
            <person name="Brusic V."/>
            <person name="Quackenbush J."/>
            <person name="Wahlestedt C."/>
            <person name="Mattick J.S."/>
            <person name="Hume D.A."/>
            <person name="Kai C."/>
            <person name="Sasaki D."/>
            <person name="Tomaru Y."/>
            <person name="Fukuda S."/>
            <person name="Kanamori-Katayama M."/>
            <person name="Suzuki M."/>
            <person name="Aoki J."/>
            <person name="Arakawa T."/>
            <person name="Iida J."/>
            <person name="Imamura K."/>
            <person name="Itoh M."/>
            <person name="Kato T."/>
            <person name="Kawaji H."/>
            <person name="Kawagashira N."/>
            <person name="Kawashima T."/>
            <person name="Kojima M."/>
            <person name="Kondo S."/>
            <person name="Konno H."/>
            <person name="Nakano K."/>
            <person name="Ninomiya N."/>
            <person name="Nishio T."/>
            <person name="Okada M."/>
            <person name="Plessy C."/>
            <person name="Shibata K."/>
            <person name="Shiraki T."/>
            <person name="Suzuki S."/>
            <person name="Tagami M."/>
            <person name="Waki K."/>
            <person name="Watahiki A."/>
            <person name="Okamura-Oho Y."/>
            <person name="Suzuki H."/>
            <person name="Kawai J."/>
            <person name="Hayashizaki Y."/>
        </authorList>
    </citation>
    <scope>NUCLEOTIDE SEQUENCE [LARGE SCALE MRNA]</scope>
    <source>
        <strain>C57BL/6J</strain>
        <tissue>Head</tissue>
    </source>
</reference>
<reference key="3">
    <citation type="journal article" date="2004" name="Genome Res.">
        <title>The status, quality, and expansion of the NIH full-length cDNA project: the Mammalian Gene Collection (MGC).</title>
        <authorList>
            <consortium name="The MGC Project Team"/>
        </authorList>
    </citation>
    <scope>NUCLEOTIDE SEQUENCE [LARGE SCALE MRNA]</scope>
    <source>
        <tissue>Brain</tissue>
    </source>
</reference>
<comment type="function">
    <text evidence="1">One gap junction consists of a cluster of closely packed pairs of transmembrane channels, the connexons, through which materials of low MW diffuse from one cell to a neighboring cell.</text>
</comment>
<comment type="subunit">
    <text evidence="1">A connexon is composed of a hexamer of connexins.</text>
</comment>
<comment type="subcellular location">
    <subcellularLocation>
        <location evidence="1">Cell membrane</location>
        <topology evidence="1">Multi-pass membrane protein</topology>
    </subcellularLocation>
    <subcellularLocation>
        <location evidence="1">Cell junction</location>
        <location evidence="1">Gap junction</location>
    </subcellularLocation>
</comment>
<comment type="similarity">
    <text evidence="4">Belongs to the connexin family. Delta-type subfamily.</text>
</comment>
<accession>Q8BSD4</accession>
<accession>B2RQL7</accession>
<accession>Q8C6W6</accession>
<accession>Q91YD0</accession>
<protein>
    <recommendedName>
        <fullName>Gap junction delta-4 protein</fullName>
    </recommendedName>
    <alternativeName>
        <fullName>Connexin-39</fullName>
        <shortName>Cx39</shortName>
    </alternativeName>
</protein>
<gene>
    <name type="primary">Gjd4</name>
</gene>